<comment type="function">
    <text evidence="1">This protein is one of the two subunits of integration host factor, a specific DNA-binding protein that functions in genetic recombination as well as in transcriptional and translational control.</text>
</comment>
<comment type="subunit">
    <text evidence="1">Heterodimer of an alpha and a beta chain.</text>
</comment>
<comment type="similarity">
    <text evidence="1">Belongs to the bacterial histone-like protein family.</text>
</comment>
<evidence type="ECO:0000255" key="1">
    <source>
        <dbReference type="HAMAP-Rule" id="MF_00381"/>
    </source>
</evidence>
<keyword id="KW-0233">DNA recombination</keyword>
<keyword id="KW-0238">DNA-binding</keyword>
<keyword id="KW-1185">Reference proteome</keyword>
<keyword id="KW-0804">Transcription</keyword>
<keyword id="KW-0805">Transcription regulation</keyword>
<keyword id="KW-0810">Translation regulation</keyword>
<name>IHFB_IDILO</name>
<protein>
    <recommendedName>
        <fullName evidence="1">Integration host factor subunit beta</fullName>
        <shortName evidence="1">IHF-beta</shortName>
    </recommendedName>
</protein>
<accession>Q5QZ46</accession>
<reference key="1">
    <citation type="journal article" date="2004" name="Proc. Natl. Acad. Sci. U.S.A.">
        <title>Genome sequence of the deep-sea gamma-proteobacterium Idiomarina loihiensis reveals amino acid fermentation as a source of carbon and energy.</title>
        <authorList>
            <person name="Hou S."/>
            <person name="Saw J.H."/>
            <person name="Lee K.S."/>
            <person name="Freitas T.A."/>
            <person name="Belisle C."/>
            <person name="Kawarabayasi Y."/>
            <person name="Donachie S.P."/>
            <person name="Pikina A."/>
            <person name="Galperin M.Y."/>
            <person name="Koonin E.V."/>
            <person name="Makarova K.S."/>
            <person name="Omelchenko M.V."/>
            <person name="Sorokin A."/>
            <person name="Wolf Y.I."/>
            <person name="Li Q.X."/>
            <person name="Keum Y.S."/>
            <person name="Campbell S."/>
            <person name="Denery J."/>
            <person name="Aizawa S."/>
            <person name="Shibata S."/>
            <person name="Malahoff A."/>
            <person name="Alam M."/>
        </authorList>
    </citation>
    <scope>NUCLEOTIDE SEQUENCE [LARGE SCALE GENOMIC DNA]</scope>
    <source>
        <strain>ATCC BAA-735 / DSM 15497 / L2-TR</strain>
    </source>
</reference>
<feature type="chain" id="PRO_1000122220" description="Integration host factor subunit beta">
    <location>
        <begin position="1"/>
        <end position="93"/>
    </location>
</feature>
<dbReference type="EMBL" id="AE017340">
    <property type="protein sequence ID" value="AAV82194.1"/>
    <property type="molecule type" value="Genomic_DNA"/>
</dbReference>
<dbReference type="RefSeq" id="WP_011234600.1">
    <property type="nucleotide sequence ID" value="NC_006512.1"/>
</dbReference>
<dbReference type="SMR" id="Q5QZ46"/>
<dbReference type="STRING" id="283942.IL1354"/>
<dbReference type="GeneID" id="41336530"/>
<dbReference type="KEGG" id="ilo:IL1354"/>
<dbReference type="eggNOG" id="COG0776">
    <property type="taxonomic scope" value="Bacteria"/>
</dbReference>
<dbReference type="HOGENOM" id="CLU_105066_2_0_6"/>
<dbReference type="OrthoDB" id="9804203at2"/>
<dbReference type="Proteomes" id="UP000001171">
    <property type="component" value="Chromosome"/>
</dbReference>
<dbReference type="GO" id="GO:0005694">
    <property type="term" value="C:chromosome"/>
    <property type="evidence" value="ECO:0007669"/>
    <property type="project" value="InterPro"/>
</dbReference>
<dbReference type="GO" id="GO:0005829">
    <property type="term" value="C:cytosol"/>
    <property type="evidence" value="ECO:0007669"/>
    <property type="project" value="TreeGrafter"/>
</dbReference>
<dbReference type="GO" id="GO:0003677">
    <property type="term" value="F:DNA binding"/>
    <property type="evidence" value="ECO:0007669"/>
    <property type="project" value="UniProtKB-UniRule"/>
</dbReference>
<dbReference type="GO" id="GO:0030527">
    <property type="term" value="F:structural constituent of chromatin"/>
    <property type="evidence" value="ECO:0007669"/>
    <property type="project" value="InterPro"/>
</dbReference>
<dbReference type="GO" id="GO:0006310">
    <property type="term" value="P:DNA recombination"/>
    <property type="evidence" value="ECO:0007669"/>
    <property type="project" value="UniProtKB-UniRule"/>
</dbReference>
<dbReference type="GO" id="GO:0006355">
    <property type="term" value="P:regulation of DNA-templated transcription"/>
    <property type="evidence" value="ECO:0007669"/>
    <property type="project" value="UniProtKB-UniRule"/>
</dbReference>
<dbReference type="GO" id="GO:0006417">
    <property type="term" value="P:regulation of translation"/>
    <property type="evidence" value="ECO:0007669"/>
    <property type="project" value="UniProtKB-UniRule"/>
</dbReference>
<dbReference type="CDD" id="cd13836">
    <property type="entry name" value="IHF_B"/>
    <property type="match status" value="1"/>
</dbReference>
<dbReference type="FunFam" id="4.10.520.10:FF:000003">
    <property type="entry name" value="Integration host factor subunit beta"/>
    <property type="match status" value="1"/>
</dbReference>
<dbReference type="Gene3D" id="4.10.520.10">
    <property type="entry name" value="IHF-like DNA-binding proteins"/>
    <property type="match status" value="1"/>
</dbReference>
<dbReference type="HAMAP" id="MF_00381">
    <property type="entry name" value="IHF_beta"/>
    <property type="match status" value="1"/>
</dbReference>
<dbReference type="InterPro" id="IPR000119">
    <property type="entry name" value="Hist_DNA-bd"/>
</dbReference>
<dbReference type="InterPro" id="IPR020816">
    <property type="entry name" value="Histone-like_DNA-bd_CS"/>
</dbReference>
<dbReference type="InterPro" id="IPR010992">
    <property type="entry name" value="IHF-like_DNA-bd_dom_sf"/>
</dbReference>
<dbReference type="InterPro" id="IPR005685">
    <property type="entry name" value="IHF_beta"/>
</dbReference>
<dbReference type="NCBIfam" id="TIGR00988">
    <property type="entry name" value="hip"/>
    <property type="match status" value="1"/>
</dbReference>
<dbReference type="NCBIfam" id="NF001222">
    <property type="entry name" value="PRK00199.1"/>
    <property type="match status" value="1"/>
</dbReference>
<dbReference type="PANTHER" id="PTHR33175">
    <property type="entry name" value="DNA-BINDING PROTEIN HU"/>
    <property type="match status" value="1"/>
</dbReference>
<dbReference type="PANTHER" id="PTHR33175:SF5">
    <property type="entry name" value="INTEGRATION HOST FACTOR SUBUNIT BETA"/>
    <property type="match status" value="1"/>
</dbReference>
<dbReference type="Pfam" id="PF00216">
    <property type="entry name" value="Bac_DNA_binding"/>
    <property type="match status" value="1"/>
</dbReference>
<dbReference type="PRINTS" id="PR01727">
    <property type="entry name" value="DNABINDINGHU"/>
</dbReference>
<dbReference type="SMART" id="SM00411">
    <property type="entry name" value="BHL"/>
    <property type="match status" value="1"/>
</dbReference>
<dbReference type="SUPFAM" id="SSF47729">
    <property type="entry name" value="IHF-like DNA-binding proteins"/>
    <property type="match status" value="1"/>
</dbReference>
<dbReference type="PROSITE" id="PS00045">
    <property type="entry name" value="HISTONE_LIKE"/>
    <property type="match status" value="1"/>
</dbReference>
<sequence>MTKSELIERLTLKHELPPKQVEASVKEILEQMVQSLSQGKRVEIRGFGSFSLHYRAPRVGRNPKTGDPVELDGKYVPHFKAGKELRERVDTLS</sequence>
<organism>
    <name type="scientific">Idiomarina loihiensis (strain ATCC BAA-735 / DSM 15497 / L2-TR)</name>
    <dbReference type="NCBI Taxonomy" id="283942"/>
    <lineage>
        <taxon>Bacteria</taxon>
        <taxon>Pseudomonadati</taxon>
        <taxon>Pseudomonadota</taxon>
        <taxon>Gammaproteobacteria</taxon>
        <taxon>Alteromonadales</taxon>
        <taxon>Idiomarinaceae</taxon>
        <taxon>Idiomarina</taxon>
    </lineage>
</organism>
<gene>
    <name evidence="1" type="primary">ihfB</name>
    <name evidence="1" type="synonym">himD</name>
    <name type="ordered locus">IL1354</name>
</gene>
<proteinExistence type="inferred from homology"/>